<sequence>MKGLFVTIEGPEGSGKTTLIQGLLPYFEQKEQKVMATREPGGIAISEDIRTILHKQEYTMMEARTEALLYAAARRQHLVEKVMPALNEDYLVLCDRFIDSSLAYQGYARGLGMDKVFEINRFATEDCMPSLTIYLDIEPEVGLARIAKDAGREVNRLDMEDISFHKRVREGYLQVVERFSDRIVLVNADQPMEKLIEEVIQVIEDKLL</sequence>
<accession>B7HPU1</accession>
<comment type="function">
    <text evidence="1">Phosphorylation of dTMP to form dTDP in both de novo and salvage pathways of dTTP synthesis.</text>
</comment>
<comment type="catalytic activity">
    <reaction evidence="1">
        <text>dTMP + ATP = dTDP + ADP</text>
        <dbReference type="Rhea" id="RHEA:13517"/>
        <dbReference type="ChEBI" id="CHEBI:30616"/>
        <dbReference type="ChEBI" id="CHEBI:58369"/>
        <dbReference type="ChEBI" id="CHEBI:63528"/>
        <dbReference type="ChEBI" id="CHEBI:456216"/>
        <dbReference type="EC" id="2.7.4.9"/>
    </reaction>
</comment>
<comment type="similarity">
    <text evidence="1">Belongs to the thymidylate kinase family.</text>
</comment>
<proteinExistence type="inferred from homology"/>
<gene>
    <name evidence="1" type="primary">tmk</name>
    <name type="ordered locus">BCAH187_A0039</name>
</gene>
<protein>
    <recommendedName>
        <fullName evidence="1">Thymidylate kinase</fullName>
        <ecNumber evidence="1">2.7.4.9</ecNumber>
    </recommendedName>
    <alternativeName>
        <fullName evidence="1">dTMP kinase</fullName>
    </alternativeName>
</protein>
<dbReference type="EC" id="2.7.4.9" evidence="1"/>
<dbReference type="EMBL" id="CP001177">
    <property type="protein sequence ID" value="ACJ81706.1"/>
    <property type="molecule type" value="Genomic_DNA"/>
</dbReference>
<dbReference type="SMR" id="B7HPU1"/>
<dbReference type="KEGG" id="bcr:BCAH187_A0039"/>
<dbReference type="HOGENOM" id="CLU_049131_0_2_9"/>
<dbReference type="Proteomes" id="UP000002214">
    <property type="component" value="Chromosome"/>
</dbReference>
<dbReference type="GO" id="GO:0005829">
    <property type="term" value="C:cytosol"/>
    <property type="evidence" value="ECO:0007669"/>
    <property type="project" value="TreeGrafter"/>
</dbReference>
<dbReference type="GO" id="GO:0005524">
    <property type="term" value="F:ATP binding"/>
    <property type="evidence" value="ECO:0007669"/>
    <property type="project" value="UniProtKB-UniRule"/>
</dbReference>
<dbReference type="GO" id="GO:0004798">
    <property type="term" value="F:dTMP kinase activity"/>
    <property type="evidence" value="ECO:0007669"/>
    <property type="project" value="UniProtKB-UniRule"/>
</dbReference>
<dbReference type="GO" id="GO:0006233">
    <property type="term" value="P:dTDP biosynthetic process"/>
    <property type="evidence" value="ECO:0007669"/>
    <property type="project" value="InterPro"/>
</dbReference>
<dbReference type="GO" id="GO:0006235">
    <property type="term" value="P:dTTP biosynthetic process"/>
    <property type="evidence" value="ECO:0007669"/>
    <property type="project" value="UniProtKB-UniRule"/>
</dbReference>
<dbReference type="GO" id="GO:0006227">
    <property type="term" value="P:dUDP biosynthetic process"/>
    <property type="evidence" value="ECO:0007669"/>
    <property type="project" value="TreeGrafter"/>
</dbReference>
<dbReference type="CDD" id="cd01672">
    <property type="entry name" value="TMPK"/>
    <property type="match status" value="1"/>
</dbReference>
<dbReference type="FunFam" id="3.40.50.300:FF:000225">
    <property type="entry name" value="Thymidylate kinase"/>
    <property type="match status" value="1"/>
</dbReference>
<dbReference type="Gene3D" id="3.40.50.300">
    <property type="entry name" value="P-loop containing nucleotide triphosphate hydrolases"/>
    <property type="match status" value="1"/>
</dbReference>
<dbReference type="HAMAP" id="MF_00165">
    <property type="entry name" value="Thymidylate_kinase"/>
    <property type="match status" value="1"/>
</dbReference>
<dbReference type="InterPro" id="IPR027417">
    <property type="entry name" value="P-loop_NTPase"/>
</dbReference>
<dbReference type="InterPro" id="IPR039430">
    <property type="entry name" value="Thymidylate_kin-like_dom"/>
</dbReference>
<dbReference type="InterPro" id="IPR018095">
    <property type="entry name" value="Thymidylate_kin_CS"/>
</dbReference>
<dbReference type="InterPro" id="IPR018094">
    <property type="entry name" value="Thymidylate_kinase"/>
</dbReference>
<dbReference type="NCBIfam" id="TIGR00041">
    <property type="entry name" value="DTMP_kinase"/>
    <property type="match status" value="1"/>
</dbReference>
<dbReference type="PANTHER" id="PTHR10344">
    <property type="entry name" value="THYMIDYLATE KINASE"/>
    <property type="match status" value="1"/>
</dbReference>
<dbReference type="PANTHER" id="PTHR10344:SF4">
    <property type="entry name" value="UMP-CMP KINASE 2, MITOCHONDRIAL"/>
    <property type="match status" value="1"/>
</dbReference>
<dbReference type="Pfam" id="PF02223">
    <property type="entry name" value="Thymidylate_kin"/>
    <property type="match status" value="1"/>
</dbReference>
<dbReference type="SUPFAM" id="SSF52540">
    <property type="entry name" value="P-loop containing nucleoside triphosphate hydrolases"/>
    <property type="match status" value="1"/>
</dbReference>
<dbReference type="PROSITE" id="PS01331">
    <property type="entry name" value="THYMIDYLATE_KINASE"/>
    <property type="match status" value="1"/>
</dbReference>
<evidence type="ECO:0000255" key="1">
    <source>
        <dbReference type="HAMAP-Rule" id="MF_00165"/>
    </source>
</evidence>
<feature type="chain" id="PRO_1000190756" description="Thymidylate kinase">
    <location>
        <begin position="1"/>
        <end position="208"/>
    </location>
</feature>
<feature type="binding site" evidence="1">
    <location>
        <begin position="10"/>
        <end position="17"/>
    </location>
    <ligand>
        <name>ATP</name>
        <dbReference type="ChEBI" id="CHEBI:30616"/>
    </ligand>
</feature>
<reference key="1">
    <citation type="submission" date="2008-10" db="EMBL/GenBank/DDBJ databases">
        <title>Genome sequence of Bacillus cereus AH187.</title>
        <authorList>
            <person name="Dodson R.J."/>
            <person name="Durkin A.S."/>
            <person name="Rosovitz M.J."/>
            <person name="Rasko D.A."/>
            <person name="Kolsto A.B."/>
            <person name="Okstad O.A."/>
            <person name="Ravel J."/>
            <person name="Sutton G."/>
        </authorList>
    </citation>
    <scope>NUCLEOTIDE SEQUENCE [LARGE SCALE GENOMIC DNA]</scope>
    <source>
        <strain>AH187</strain>
    </source>
</reference>
<organism>
    <name type="scientific">Bacillus cereus (strain AH187)</name>
    <dbReference type="NCBI Taxonomy" id="405534"/>
    <lineage>
        <taxon>Bacteria</taxon>
        <taxon>Bacillati</taxon>
        <taxon>Bacillota</taxon>
        <taxon>Bacilli</taxon>
        <taxon>Bacillales</taxon>
        <taxon>Bacillaceae</taxon>
        <taxon>Bacillus</taxon>
        <taxon>Bacillus cereus group</taxon>
    </lineage>
</organism>
<name>KTHY_BACC7</name>
<keyword id="KW-0067">ATP-binding</keyword>
<keyword id="KW-0418">Kinase</keyword>
<keyword id="KW-0545">Nucleotide biosynthesis</keyword>
<keyword id="KW-0547">Nucleotide-binding</keyword>
<keyword id="KW-0808">Transferase</keyword>